<accession>P70033</accession>
<accession>Q8JG52</accession>
<reference evidence="14 15" key="1">
    <citation type="journal article" date="1996" name="Mech. Dev.">
        <title>xGCNF, a nuclear orphan receptor is expressed during neurulation in Xenopus laevis.</title>
        <authorList>
            <person name="Joos T.O."/>
            <person name="David R."/>
            <person name="Dreyer C."/>
        </authorList>
    </citation>
    <scope>NUCLEOTIDE SEQUENCE [MRNA] (ISOFORM EM)</scope>
    <scope>FUNCTION</scope>
    <scope>DNA-BINDING</scope>
    <scope>HOMODIMERIZATION</scope>
    <scope>SUBCELLULAR LOCATION</scope>
    <scope>TISSUE SPECIFICITY</scope>
    <scope>DEVELOPMENTAL STAGE</scope>
    <source>
        <tissue evidence="11">Neurula</tissue>
    </source>
</reference>
<reference evidence="14 16" key="2">
    <citation type="journal article" date="2002" name="Mech. Dev.">
        <title>Oocytes and embryos of Xenopus laevis express two different isoforms of germ cell nuclear factor (GCNF, NR6A1).</title>
        <authorList>
            <person name="Schohl A."/>
            <person name="Barreto G."/>
            <person name="Joos T.O."/>
            <person name="Dreyer C."/>
        </authorList>
    </citation>
    <scope>NUCLEOTIDE SEQUENCE [MRNA] OF 1-61 (ISOFORM OO)</scope>
    <scope>ALTERNATIVE SPLICING</scope>
    <scope>TISSUE SPECIFICITY</scope>
    <scope>DEVELOPMENTAL STAGE</scope>
    <source>
        <tissue evidence="16">Ovary</tissue>
    </source>
</reference>
<reference evidence="14" key="3">
    <citation type="journal article" date="1998" name="Mech. Dev.">
        <title>Anteroposterior patterning and organogenesis of Xenopus laevis require a correct dose of germ cell nuclear factor (xGCNF).</title>
        <authorList>
            <person name="David R."/>
            <person name="Joos T.O."/>
            <person name="Dreyer C."/>
        </authorList>
    </citation>
    <scope>FUNCTION</scope>
    <scope>DNA-BINDING</scope>
    <scope>SUBCELLULAR LOCATION</scope>
    <scope>TISSUE SPECIFICITY</scope>
    <scope>DEVELOPMENTAL STAGE</scope>
</reference>
<reference evidence="14" key="4">
    <citation type="journal article" date="1999" name="Dev. Biol.">
        <title>A role for xGCNF in midbrain-hindbrain patterning in Xenopus laevis.</title>
        <authorList>
            <person name="Song K."/>
            <person name="Takemaru K."/>
            <person name="Moon R.T."/>
        </authorList>
    </citation>
    <scope>FUNCTION</scope>
    <scope>TISSUE SPECIFICITY</scope>
    <scope>DEVELOPMENTAL STAGE</scope>
</reference>
<reference evidence="14" key="5">
    <citation type="journal article" date="2003" name="Dev. Biol.">
        <title>The function of Xenopus germ cell nuclear factor (xGCNF) in morphogenetic movements during neurulation.</title>
        <authorList>
            <person name="Barreto G."/>
            <person name="Reintsch W."/>
            <person name="Kaufmann C."/>
            <person name="Dreyer C."/>
        </authorList>
    </citation>
    <scope>FUNCTION</scope>
</reference>
<reference evidence="14" key="6">
    <citation type="journal article" date="2003" name="Mech. Dev.">
        <title>The germ cell nuclear factor is required for retinoic acid signaling during Xenopus development.</title>
        <authorList>
            <person name="Barreto G."/>
            <person name="Borgmeyer U."/>
            <person name="Dreyer C."/>
        </authorList>
    </citation>
    <scope>FUNCTION</scope>
    <scope>INDUCTION</scope>
</reference>
<organism>
    <name type="scientific">Xenopus laevis</name>
    <name type="common">African clawed frog</name>
    <dbReference type="NCBI Taxonomy" id="8355"/>
    <lineage>
        <taxon>Eukaryota</taxon>
        <taxon>Metazoa</taxon>
        <taxon>Chordata</taxon>
        <taxon>Craniata</taxon>
        <taxon>Vertebrata</taxon>
        <taxon>Euteleostomi</taxon>
        <taxon>Amphibia</taxon>
        <taxon>Batrachia</taxon>
        <taxon>Anura</taxon>
        <taxon>Pipoidea</taxon>
        <taxon>Pipidae</taxon>
        <taxon>Xenopodinae</taxon>
        <taxon>Xenopus</taxon>
        <taxon>Xenopus</taxon>
    </lineage>
</organism>
<feature type="chain" id="PRO_0000289151" description="Nuclear receptor subfamily 6 group A member 1">
    <location>
        <begin position="1"/>
        <end position="435"/>
    </location>
</feature>
<feature type="domain" description="NR LBD" evidence="4">
    <location>
        <begin position="204"/>
        <end position="435"/>
    </location>
</feature>
<feature type="DNA-binding region" description="Nuclear receptor" evidence="3">
    <location>
        <begin position="11"/>
        <end position="86"/>
    </location>
</feature>
<feature type="zinc finger region" description="NR C4-type" evidence="3">
    <location>
        <begin position="14"/>
        <end position="34"/>
    </location>
</feature>
<feature type="zinc finger region" description="NR C4-type" evidence="3">
    <location>
        <begin position="50"/>
        <end position="69"/>
    </location>
</feature>
<feature type="region of interest" description="Disordered" evidence="5">
    <location>
        <begin position="84"/>
        <end position="158"/>
    </location>
</feature>
<feature type="compositionally biased region" description="Polar residues" evidence="5">
    <location>
        <begin position="121"/>
        <end position="141"/>
    </location>
</feature>
<feature type="compositionally biased region" description="Low complexity" evidence="5">
    <location>
        <begin position="142"/>
        <end position="156"/>
    </location>
</feature>
<feature type="splice variant" id="VSP_052452" description="In isoform Oo." evidence="12">
    <original>MDTWE</original>
    <variation>MEVERSTSGLMDSTGFYKEPAGETEHTAAGNMSDLSSDGIKINSFV</variation>
    <location>
        <begin position="1"/>
        <end position="5"/>
    </location>
</feature>
<feature type="sequence conflict" description="In Ref. 1; AAC60126." evidence="14" ref="1">
    <original>S</original>
    <variation>T</variation>
    <location>
        <position position="41"/>
    </location>
</feature>
<keyword id="KW-0025">Alternative splicing</keyword>
<keyword id="KW-0963">Cytoplasm</keyword>
<keyword id="KW-0217">Developmental protein</keyword>
<keyword id="KW-0221">Differentiation</keyword>
<keyword id="KW-0238">DNA-binding</keyword>
<keyword id="KW-0479">Metal-binding</keyword>
<keyword id="KW-0524">Neurogenesis</keyword>
<keyword id="KW-0539">Nucleus</keyword>
<keyword id="KW-0675">Receptor</keyword>
<keyword id="KW-1185">Reference proteome</keyword>
<keyword id="KW-0804">Transcription</keyword>
<keyword id="KW-0805">Transcription regulation</keyword>
<keyword id="KW-0862">Zinc</keyword>
<keyword id="KW-0863">Zinc-finger</keyword>
<sequence>MDTWEDDRVDQRACLICGDRATGLHYGIISCEGCKGFFKRSICNKRVYRCSRDKNCVMSRKQRNRCQYCRLLKCLQMGMNRKAIREDGMPGGRNKSIGPVQISDEEVERIMSGQEFEEEANTSWSNNGDSDHSSPGNAVSESNQPSPVSTPSSSRSMELNGFSSLRDQYLGTPGPTHYQYLPHLFSFSAHPTIIPAQSRSLDPQSHTLINQLLTAEDIEPLNTPMLIEDGYKVTQSELFALLCRLADELLFRQITWVKKLPFFCDLSIKDYTCLLSTTWQELILLSSITTYSKQIFGDLTDVTSKYSPSEDELHRFSEDGMEVMERLIYLFRKFSQLKVSNEEYVCMKAINFLNQDIQGISSASQVEQLNKRYWYVCQDFTEYRYPHQPNRFPDLMMCLPEVRYIAGKLVNVPLEQLPLLFKAFLHSCKTIVTKE</sequence>
<comment type="function">
    <text evidence="6 7 9 10 11">Probable orphan nuclear receptor. Binds to a response element containing repeats of the motif 5'-AGGTCA-3'. Required for anterior-posterior patterning during organogenesis. Acts with chordin to play a role in patterning the midbrain-hindbrain. Isoform Em is required for integrin-mediated cell matrix interaction during neurulation and for the morphogenetic movements leading to formation of the neural tube. Also mediates the effect of retinoic acid on primary neurogenesis.</text>
</comment>
<comment type="subunit">
    <text evidence="11">Homodimer.</text>
</comment>
<comment type="subcellular location">
    <subcellularLocation>
        <location evidence="6 11">Cytoplasm</location>
    </subcellularLocation>
    <subcellularLocation>
        <location evidence="3 6 11">Nucleus</location>
    </subcellularLocation>
</comment>
<comment type="alternative products">
    <event type="alternative splicing"/>
    <isoform>
        <id>P70033-1</id>
        <name evidence="11">Em</name>
        <name evidence="8">xlEm</name>
        <sequence type="displayed"/>
    </isoform>
    <isoform>
        <id>P70033-2</id>
        <name evidence="8">Oo</name>
        <name evidence="8">xlOo</name>
        <sequence type="described" ref="VSP_052452"/>
    </isoform>
</comment>
<comment type="tissue specificity">
    <text evidence="6 7 8 11">Transiently expressed in differentiating cells of all embryonic germ layers. Expressed in an anterior to posterior concentration gradient from late gastrula to midneurula stages. Shows a complicated spatio-temporal pattern of expression during neurulation, being predominant in the neural plate and neural crest in midneurula embryos. At late tailbud (stage 30), mainly expressed in the head mesenchyme, gill arches and tail tip. Expression persists in the epidermis, somites and endoderm, and in the central nervous system, expression is restricted to the midbrain, hindbrain and part of the spinal cord. Isoforms Oo and Em are both expressed in the brain and isoform Oo is expressed in the germ cells of both the adult testis and ovary.</text>
</comment>
<comment type="developmental stage">
    <text evidence="6 7 8 11">Isoform Oo is expressed both maternally and zygotically, being predominantly expressed in oocytes and embryos before the mid-blastula transition but present at later stages at very low levels. Isoform Em is expressed zygotically between late gastrula stage and late tailbud stage 30, being predominant during tailbud stages.</text>
</comment>
<comment type="induction">
    <text evidence="9">By retinoic acid.</text>
</comment>
<comment type="miscellaneous">
    <molecule>Isoform Em</molecule>
    <text evidence="8">Embryonic form.</text>
</comment>
<comment type="miscellaneous">
    <molecule>Isoform Oo</molecule>
    <text evidence="8">Oocyte form.</text>
</comment>
<comment type="similarity">
    <text evidence="2">Belongs to the nuclear hormone receptor family. NR6 subfamily.</text>
</comment>
<evidence type="ECO:0000250" key="1">
    <source>
        <dbReference type="UniProtKB" id="Q15406"/>
    </source>
</evidence>
<evidence type="ECO:0000255" key="2"/>
<evidence type="ECO:0000255" key="3">
    <source>
        <dbReference type="PROSITE-ProRule" id="PRU00407"/>
    </source>
</evidence>
<evidence type="ECO:0000255" key="4">
    <source>
        <dbReference type="PROSITE-ProRule" id="PRU01189"/>
    </source>
</evidence>
<evidence type="ECO:0000256" key="5">
    <source>
        <dbReference type="SAM" id="MobiDB-lite"/>
    </source>
</evidence>
<evidence type="ECO:0000269" key="6">
    <source>
    </source>
</evidence>
<evidence type="ECO:0000269" key="7">
    <source>
    </source>
</evidence>
<evidence type="ECO:0000269" key="8">
    <source>
    </source>
</evidence>
<evidence type="ECO:0000269" key="9">
    <source>
    </source>
</evidence>
<evidence type="ECO:0000269" key="10">
    <source>
    </source>
</evidence>
<evidence type="ECO:0000269" key="11">
    <source>
    </source>
</evidence>
<evidence type="ECO:0000303" key="12">
    <source>
    </source>
</evidence>
<evidence type="ECO:0000303" key="13">
    <source>
    </source>
</evidence>
<evidence type="ECO:0000305" key="14"/>
<evidence type="ECO:0000312" key="15">
    <source>
        <dbReference type="EMBL" id="AAC60126.1"/>
    </source>
</evidence>
<evidence type="ECO:0000312" key="16">
    <source>
        <dbReference type="EMBL" id="AAM95452.1"/>
    </source>
</evidence>
<name>NR6A1_XENLA</name>
<protein>
    <recommendedName>
        <fullName>Nuclear receptor subfamily 6 group A member 1</fullName>
    </recommendedName>
    <alternativeName>
        <fullName>Germ cell nuclear factor</fullName>
        <shortName>GCNF</shortName>
        <shortName>xGCNF</shortName>
    </alternativeName>
</protein>
<proteinExistence type="evidence at protein level"/>
<gene>
    <name evidence="1" type="primary">nr6a1</name>
    <name evidence="13" type="synonym">gcnf</name>
</gene>
<dbReference type="EMBL" id="U58683">
    <property type="protein sequence ID" value="AAC60126.1"/>
    <property type="molecule type" value="mRNA"/>
</dbReference>
<dbReference type="EMBL" id="AY130967">
    <property type="protein sequence ID" value="AAM95452.1"/>
    <property type="molecule type" value="mRNA"/>
</dbReference>
<dbReference type="RefSeq" id="NP_001084102.1">
    <property type="nucleotide sequence ID" value="NM_001090633.1"/>
</dbReference>
<dbReference type="SMR" id="P70033"/>
<dbReference type="GeneID" id="399304"/>
<dbReference type="KEGG" id="xla:399304"/>
<dbReference type="AGR" id="Xenbase:XB-GENE-487596"/>
<dbReference type="CTD" id="399304"/>
<dbReference type="Xenbase" id="XB-GENE-487596">
    <property type="gene designation" value="nr6a1.S"/>
</dbReference>
<dbReference type="OrthoDB" id="10006908at2759"/>
<dbReference type="Proteomes" id="UP000186698">
    <property type="component" value="Chromosome 8S"/>
</dbReference>
<dbReference type="Bgee" id="399304">
    <property type="expression patterns" value="Expressed in neurula embryo and 6 other cell types or tissues"/>
</dbReference>
<dbReference type="GO" id="GO:0000785">
    <property type="term" value="C:chromatin"/>
    <property type="evidence" value="ECO:0000318"/>
    <property type="project" value="GO_Central"/>
</dbReference>
<dbReference type="GO" id="GO:0005737">
    <property type="term" value="C:cytoplasm"/>
    <property type="evidence" value="ECO:0000314"/>
    <property type="project" value="UniProtKB"/>
</dbReference>
<dbReference type="GO" id="GO:0005634">
    <property type="term" value="C:nucleus"/>
    <property type="evidence" value="ECO:0000314"/>
    <property type="project" value="UniProtKB"/>
</dbReference>
<dbReference type="GO" id="GO:0034056">
    <property type="term" value="F:estrogen response element binding"/>
    <property type="evidence" value="ECO:0000318"/>
    <property type="project" value="GO_Central"/>
</dbReference>
<dbReference type="GO" id="GO:0004879">
    <property type="term" value="F:nuclear receptor activity"/>
    <property type="evidence" value="ECO:0000318"/>
    <property type="project" value="GO_Central"/>
</dbReference>
<dbReference type="GO" id="GO:0042803">
    <property type="term" value="F:protein homodimerization activity"/>
    <property type="evidence" value="ECO:0000314"/>
    <property type="project" value="UniProtKB"/>
</dbReference>
<dbReference type="GO" id="GO:0043565">
    <property type="term" value="F:sequence-specific DNA binding"/>
    <property type="evidence" value="ECO:0000314"/>
    <property type="project" value="UniProtKB"/>
</dbReference>
<dbReference type="GO" id="GO:0008270">
    <property type="term" value="F:zinc ion binding"/>
    <property type="evidence" value="ECO:0007669"/>
    <property type="project" value="UniProtKB-KW"/>
</dbReference>
<dbReference type="GO" id="GO:0048513">
    <property type="term" value="P:animal organ development"/>
    <property type="evidence" value="ECO:0000315"/>
    <property type="project" value="UniProtKB"/>
</dbReference>
<dbReference type="GO" id="GO:0009952">
    <property type="term" value="P:anterior/posterior pattern specification"/>
    <property type="evidence" value="ECO:0000315"/>
    <property type="project" value="UniProtKB"/>
</dbReference>
<dbReference type="GO" id="GO:0016477">
    <property type="term" value="P:cell migration"/>
    <property type="evidence" value="ECO:0000315"/>
    <property type="project" value="UniProtKB"/>
</dbReference>
<dbReference type="GO" id="GO:0030917">
    <property type="term" value="P:midbrain-hindbrain boundary development"/>
    <property type="evidence" value="ECO:0000315"/>
    <property type="project" value="UniProtKB"/>
</dbReference>
<dbReference type="GO" id="GO:0022008">
    <property type="term" value="P:neurogenesis"/>
    <property type="evidence" value="ECO:0000315"/>
    <property type="project" value="UniProtKB"/>
</dbReference>
<dbReference type="GO" id="GO:0006357">
    <property type="term" value="P:regulation of transcription by RNA polymerase II"/>
    <property type="evidence" value="ECO:0000318"/>
    <property type="project" value="GO_Central"/>
</dbReference>
<dbReference type="CDD" id="cd07169">
    <property type="entry name" value="NR_DBD_GCNF_like"/>
    <property type="match status" value="1"/>
</dbReference>
<dbReference type="CDD" id="cd06953">
    <property type="entry name" value="NR_LBD_DHR4_like"/>
    <property type="match status" value="1"/>
</dbReference>
<dbReference type="FunFam" id="3.30.50.10:FF:000006">
    <property type="entry name" value="Nuclear receptor subfamily 5 group A member"/>
    <property type="match status" value="1"/>
</dbReference>
<dbReference type="FunFam" id="1.10.565.10:FF:000015">
    <property type="entry name" value="Nuclear receptor subfamily 6 group A member 1"/>
    <property type="match status" value="1"/>
</dbReference>
<dbReference type="Gene3D" id="3.30.50.10">
    <property type="entry name" value="Erythroid Transcription Factor GATA-1, subunit A"/>
    <property type="match status" value="1"/>
</dbReference>
<dbReference type="Gene3D" id="1.10.565.10">
    <property type="entry name" value="Retinoid X Receptor"/>
    <property type="match status" value="1"/>
</dbReference>
<dbReference type="InterPro" id="IPR035500">
    <property type="entry name" value="NHR-like_dom_sf"/>
</dbReference>
<dbReference type="InterPro" id="IPR000536">
    <property type="entry name" value="Nucl_hrmn_rcpt_lig-bd"/>
</dbReference>
<dbReference type="InterPro" id="IPR050200">
    <property type="entry name" value="Nuclear_hormone_rcpt_NR3"/>
</dbReference>
<dbReference type="InterPro" id="IPR001723">
    <property type="entry name" value="Nuclear_hrmn_rcpt"/>
</dbReference>
<dbReference type="InterPro" id="IPR001628">
    <property type="entry name" value="Znf_hrmn_rcpt"/>
</dbReference>
<dbReference type="InterPro" id="IPR013088">
    <property type="entry name" value="Znf_NHR/GATA"/>
</dbReference>
<dbReference type="PANTHER" id="PTHR48092">
    <property type="entry name" value="KNIRPS-RELATED PROTEIN-RELATED"/>
    <property type="match status" value="1"/>
</dbReference>
<dbReference type="Pfam" id="PF00104">
    <property type="entry name" value="Hormone_recep"/>
    <property type="match status" value="1"/>
</dbReference>
<dbReference type="Pfam" id="PF00105">
    <property type="entry name" value="zf-C4"/>
    <property type="match status" value="1"/>
</dbReference>
<dbReference type="PRINTS" id="PR00398">
    <property type="entry name" value="STRDHORMONER"/>
</dbReference>
<dbReference type="PRINTS" id="PR00047">
    <property type="entry name" value="STROIDFINGER"/>
</dbReference>
<dbReference type="SMART" id="SM00430">
    <property type="entry name" value="HOLI"/>
    <property type="match status" value="1"/>
</dbReference>
<dbReference type="SMART" id="SM00399">
    <property type="entry name" value="ZnF_C4"/>
    <property type="match status" value="1"/>
</dbReference>
<dbReference type="SUPFAM" id="SSF57716">
    <property type="entry name" value="Glucocorticoid receptor-like (DNA-binding domain)"/>
    <property type="match status" value="1"/>
</dbReference>
<dbReference type="SUPFAM" id="SSF48508">
    <property type="entry name" value="Nuclear receptor ligand-binding domain"/>
    <property type="match status" value="1"/>
</dbReference>
<dbReference type="PROSITE" id="PS51843">
    <property type="entry name" value="NR_LBD"/>
    <property type="match status" value="1"/>
</dbReference>
<dbReference type="PROSITE" id="PS00031">
    <property type="entry name" value="NUCLEAR_REC_DBD_1"/>
    <property type="match status" value="1"/>
</dbReference>
<dbReference type="PROSITE" id="PS51030">
    <property type="entry name" value="NUCLEAR_REC_DBD_2"/>
    <property type="match status" value="1"/>
</dbReference>